<feature type="propeptide" id="PRO_0000443581" evidence="2">
    <location>
        <begin position="1"/>
        <end position="10"/>
    </location>
</feature>
<feature type="peptide" id="PRO_0000443582" description="Alpha-amanitin" evidence="2">
    <location>
        <begin position="11"/>
        <end position="18"/>
    </location>
</feature>
<feature type="propeptide" id="PRO_0000443583" evidence="2">
    <location>
        <begin position="19"/>
        <end position="33"/>
    </location>
</feature>
<feature type="modified residue" description="(3R,4R)-4,5-dihydroxyisoleucine; in form alpha-amanitin" evidence="3">
    <location>
        <position position="11"/>
    </location>
</feature>
<feature type="modified residue" description="(3R,4S)-4-hydroxyisoleucine; in form gamma-amanitin" evidence="3">
    <location>
        <position position="11"/>
    </location>
</feature>
<feature type="modified residue" description="4-hydroxyproline" evidence="3">
    <location>
        <position position="18"/>
    </location>
</feature>
<feature type="cross-link" description="Cyclopeptide (Ile-Pro)" evidence="2">
    <location>
        <begin position="11"/>
        <end position="18"/>
    </location>
</feature>
<feature type="cross-link" description="2'-cysteinyl-6'-hydroxytryptophan sulfoxide (Trp-Cys)" evidence="3">
    <location>
        <begin position="12"/>
        <end position="16"/>
    </location>
</feature>
<gene>
    <name evidence="5" type="primary">AMA</name>
</gene>
<name>AAMAT_AMAPL</name>
<organism>
    <name type="scientific">Amanita pallidorosea</name>
    <dbReference type="NCBI Taxonomy" id="1324310"/>
    <lineage>
        <taxon>Eukaryota</taxon>
        <taxon>Fungi</taxon>
        <taxon>Dikarya</taxon>
        <taxon>Basidiomycota</taxon>
        <taxon>Agaricomycotina</taxon>
        <taxon>Agaricomycetes</taxon>
        <taxon>Agaricomycetidae</taxon>
        <taxon>Agaricales</taxon>
        <taxon>Pluteineae</taxon>
        <taxon>Amanitaceae</taxon>
        <taxon>Amanita</taxon>
    </lineage>
</organism>
<protein>
    <recommendedName>
        <fullName evidence="5">Alpha-amanitin proprotein</fullName>
    </recommendedName>
    <component>
        <recommendedName>
            <fullName evidence="5">Alpha-amanitin</fullName>
        </recommendedName>
        <alternativeName>
            <fullName evidence="5">Amatoxin</fullName>
        </alternativeName>
        <alternativeName>
            <fullName evidence="3">Gamma-amanitin</fullName>
        </alternativeName>
    </component>
</protein>
<accession>A0A023IWK7</accession>
<accession>A0A023UAI5</accession>
<comment type="function">
    <text evidence="7">Major toxin belonging to the bicyclic octapeptides amatoxins that acts by binding non-competitively to RNA polymerase II and greatly slowing the elongation of transcripts from target promoters (PubMed:24613547).</text>
</comment>
<comment type="PTM">
    <text evidence="1 7">Processed by the macrocyclase-peptidase enzyme POPB to yield a toxic cyclic decapeptide (PubMed:24613547). POPB first removes 10 residues from the N-terminus (By similarity). Conformational trapping of the remaining peptide forces the enzyme to release this intermediate rather than proceed to macrocyclization (By similarity). The enzyme rebinds the remaining peptide in a different conformation and catalyzes macrocyclization of the N-terminal 8 residues (By similarity).</text>
</comment>
<comment type="miscellaneous">
    <text evidence="4">The typical symptoms of amatoxin poisoning are gastro-intestinal distress beginning 6-12 hours after ingestion, a remission phase lasting 12-24 hours, and progressive loss of liver function culminating in death within 3-5 days (PubMed:12475187). One of the few effective treatments is liver transplantation (PubMed:12475187).</text>
</comment>
<comment type="similarity">
    <text evidence="6">Belongs to the MSDIN fungal toxin family.</text>
</comment>
<evidence type="ECO:0000250" key="1">
    <source>
        <dbReference type="UniProtKB" id="A0A067SLB9"/>
    </source>
</evidence>
<evidence type="ECO:0000250" key="2">
    <source>
        <dbReference type="UniProtKB" id="A8W7M4"/>
    </source>
</evidence>
<evidence type="ECO:0000250" key="3">
    <source>
        <dbReference type="UniProtKB" id="P85421"/>
    </source>
</evidence>
<evidence type="ECO:0000303" key="4">
    <source>
    </source>
</evidence>
<evidence type="ECO:0000303" key="5">
    <source>
    </source>
</evidence>
<evidence type="ECO:0000305" key="6"/>
<evidence type="ECO:0000305" key="7">
    <source>
    </source>
</evidence>
<dbReference type="EMBL" id="KF552096">
    <property type="protein sequence ID" value="AHB18724.1"/>
    <property type="molecule type" value="Genomic_DNA"/>
</dbReference>
<dbReference type="EMBL" id="KC778578">
    <property type="protein sequence ID" value="AGO98234.1"/>
    <property type="molecule type" value="Genomic_DNA"/>
</dbReference>
<dbReference type="EMBL" id="KC778580">
    <property type="protein sequence ID" value="AGO98236.1"/>
    <property type="molecule type" value="Genomic_DNA"/>
</dbReference>
<dbReference type="EMBL" id="KF546285">
    <property type="protein sequence ID" value="AHX98309.1"/>
    <property type="molecule type" value="Genomic_DNA"/>
</dbReference>
<dbReference type="EMBL" id="KF546286">
    <property type="protein sequence ID" value="AHX98310.1"/>
    <property type="molecule type" value="Genomic_DNA"/>
</dbReference>
<dbReference type="EMBL" id="KF546287">
    <property type="protein sequence ID" value="AHX98311.1"/>
    <property type="molecule type" value="Genomic_DNA"/>
</dbReference>
<dbReference type="GO" id="GO:0090729">
    <property type="term" value="F:toxin activity"/>
    <property type="evidence" value="ECO:0007669"/>
    <property type="project" value="UniProtKB-KW"/>
</dbReference>
<dbReference type="InterPro" id="IPR027582">
    <property type="entry name" value="Amanitin/phalloidin"/>
</dbReference>
<dbReference type="NCBIfam" id="TIGR04309">
    <property type="entry name" value="amanitin"/>
    <property type="match status" value="1"/>
</dbReference>
<dbReference type="Pfam" id="PF24112">
    <property type="entry name" value="Amanitin"/>
    <property type="match status" value="1"/>
</dbReference>
<reference key="1">
    <citation type="journal article" date="2014" name="Toxicon">
        <title>The molecular diversity of toxin gene families in lethal Amanita mushrooms.</title>
        <authorList>
            <person name="Li P."/>
            <person name="Deng W."/>
            <person name="Li T."/>
        </authorList>
    </citation>
    <scope>NUCLEOTIDE SEQUENCE [GENOMIC DNA]</scope>
    <scope>FUNCTION</scope>
</reference>
<reference key="2">
    <citation type="journal article" date="2002" name="J. Toxicol. Clin. Toxicol.">
        <title>Treatment of amatoxin poisoning: 20-year retrospective analysis.</title>
        <authorList>
            <person name="Enjalbert F."/>
            <person name="Rapior S."/>
            <person name="Nouguier-Soule J."/>
            <person name="Guillon S."/>
            <person name="Amouroux N."/>
            <person name="Cabot C."/>
        </authorList>
    </citation>
    <scope>REVIEW ON TOXICITY</scope>
</reference>
<sequence>MSDINATRLPIWGIGCNPCVGDEVTALITRGEA</sequence>
<proteinExistence type="inferred from homology"/>
<keyword id="KW-0379">Hydroxylation</keyword>
<keyword id="KW-0883">Thioether bond</keyword>
<keyword id="KW-0800">Toxin</keyword>